<dbReference type="EMBL" id="CP000948">
    <property type="protein sequence ID" value="ACB04380.1"/>
    <property type="molecule type" value="Genomic_DNA"/>
</dbReference>
<dbReference type="RefSeq" id="WP_000424395.1">
    <property type="nucleotide sequence ID" value="NC_010473.1"/>
</dbReference>
<dbReference type="SMR" id="B1X6H0"/>
<dbReference type="GeneID" id="97442859"/>
<dbReference type="KEGG" id="ecd:ECDH10B_3494"/>
<dbReference type="HOGENOM" id="CLU_041575_5_2_6"/>
<dbReference type="GO" id="GO:1990904">
    <property type="term" value="C:ribonucleoprotein complex"/>
    <property type="evidence" value="ECO:0007669"/>
    <property type="project" value="UniProtKB-KW"/>
</dbReference>
<dbReference type="GO" id="GO:0005840">
    <property type="term" value="C:ribosome"/>
    <property type="evidence" value="ECO:0007669"/>
    <property type="project" value="UniProtKB-KW"/>
</dbReference>
<dbReference type="GO" id="GO:0019843">
    <property type="term" value="F:rRNA binding"/>
    <property type="evidence" value="ECO:0007669"/>
    <property type="project" value="UniProtKB-UniRule"/>
</dbReference>
<dbReference type="GO" id="GO:0003735">
    <property type="term" value="F:structural constituent of ribosome"/>
    <property type="evidence" value="ECO:0007669"/>
    <property type="project" value="InterPro"/>
</dbReference>
<dbReference type="GO" id="GO:0006412">
    <property type="term" value="P:translation"/>
    <property type="evidence" value="ECO:0007669"/>
    <property type="project" value="UniProtKB-UniRule"/>
</dbReference>
<dbReference type="FunFam" id="3.40.1370.10:FF:000001">
    <property type="entry name" value="50S ribosomal protein L4"/>
    <property type="match status" value="1"/>
</dbReference>
<dbReference type="Gene3D" id="3.40.1370.10">
    <property type="match status" value="1"/>
</dbReference>
<dbReference type="HAMAP" id="MF_01328_B">
    <property type="entry name" value="Ribosomal_uL4_B"/>
    <property type="match status" value="1"/>
</dbReference>
<dbReference type="InterPro" id="IPR002136">
    <property type="entry name" value="Ribosomal_uL4"/>
</dbReference>
<dbReference type="InterPro" id="IPR013005">
    <property type="entry name" value="Ribosomal_uL4-like"/>
</dbReference>
<dbReference type="InterPro" id="IPR023574">
    <property type="entry name" value="Ribosomal_uL4_dom_sf"/>
</dbReference>
<dbReference type="NCBIfam" id="TIGR03953">
    <property type="entry name" value="rplD_bact"/>
    <property type="match status" value="1"/>
</dbReference>
<dbReference type="PANTHER" id="PTHR10746">
    <property type="entry name" value="50S RIBOSOMAL PROTEIN L4"/>
    <property type="match status" value="1"/>
</dbReference>
<dbReference type="PANTHER" id="PTHR10746:SF6">
    <property type="entry name" value="LARGE RIBOSOMAL SUBUNIT PROTEIN UL4M"/>
    <property type="match status" value="1"/>
</dbReference>
<dbReference type="Pfam" id="PF00573">
    <property type="entry name" value="Ribosomal_L4"/>
    <property type="match status" value="1"/>
</dbReference>
<dbReference type="SUPFAM" id="SSF52166">
    <property type="entry name" value="Ribosomal protein L4"/>
    <property type="match status" value="1"/>
</dbReference>
<proteinExistence type="inferred from homology"/>
<gene>
    <name evidence="1" type="primary">rplD</name>
    <name type="ordered locus">ECDH10B_3494</name>
</gene>
<evidence type="ECO:0000255" key="1">
    <source>
        <dbReference type="HAMAP-Rule" id="MF_01328"/>
    </source>
</evidence>
<evidence type="ECO:0000256" key="2">
    <source>
        <dbReference type="SAM" id="MobiDB-lite"/>
    </source>
</evidence>
<evidence type="ECO:0000305" key="3"/>
<accession>B1X6H0</accession>
<protein>
    <recommendedName>
        <fullName evidence="1">Large ribosomal subunit protein uL4</fullName>
    </recommendedName>
    <alternativeName>
        <fullName evidence="3">50S ribosomal protein L4</fullName>
    </alternativeName>
</protein>
<name>RL4_ECODH</name>
<feature type="chain" id="PRO_1000142121" description="Large ribosomal subunit protein uL4">
    <location>
        <begin position="1"/>
        <end position="201"/>
    </location>
</feature>
<feature type="region of interest" description="Disordered" evidence="2">
    <location>
        <begin position="44"/>
        <end position="71"/>
    </location>
</feature>
<keyword id="KW-0687">Ribonucleoprotein</keyword>
<keyword id="KW-0689">Ribosomal protein</keyword>
<keyword id="KW-0694">RNA-binding</keyword>
<keyword id="KW-0699">rRNA-binding</keyword>
<comment type="function">
    <text evidence="1">One of the primary rRNA binding proteins, this protein initially binds near the 5'-end of the 23S rRNA. It is important during the early stages of 50S assembly. It makes multiple contacts with different domains of the 23S rRNA in the assembled 50S subunit and ribosome.</text>
</comment>
<comment type="function">
    <text evidence="1">Forms part of the polypeptide exit tunnel.</text>
</comment>
<comment type="subunit">
    <text evidence="1">Part of the 50S ribosomal subunit.</text>
</comment>
<comment type="similarity">
    <text evidence="1">Belongs to the universal ribosomal protein uL4 family.</text>
</comment>
<reference key="1">
    <citation type="journal article" date="2008" name="J. Bacteriol.">
        <title>The complete genome sequence of Escherichia coli DH10B: insights into the biology of a laboratory workhorse.</title>
        <authorList>
            <person name="Durfee T."/>
            <person name="Nelson R."/>
            <person name="Baldwin S."/>
            <person name="Plunkett G. III"/>
            <person name="Burland V."/>
            <person name="Mau B."/>
            <person name="Petrosino J.F."/>
            <person name="Qin X."/>
            <person name="Muzny D.M."/>
            <person name="Ayele M."/>
            <person name="Gibbs R.A."/>
            <person name="Csorgo B."/>
            <person name="Posfai G."/>
            <person name="Weinstock G.M."/>
            <person name="Blattner F.R."/>
        </authorList>
    </citation>
    <scope>NUCLEOTIDE SEQUENCE [LARGE SCALE GENOMIC DNA]</scope>
    <source>
        <strain>K12 / DH10B</strain>
    </source>
</reference>
<organism>
    <name type="scientific">Escherichia coli (strain K12 / DH10B)</name>
    <dbReference type="NCBI Taxonomy" id="316385"/>
    <lineage>
        <taxon>Bacteria</taxon>
        <taxon>Pseudomonadati</taxon>
        <taxon>Pseudomonadota</taxon>
        <taxon>Gammaproteobacteria</taxon>
        <taxon>Enterobacterales</taxon>
        <taxon>Enterobacteriaceae</taxon>
        <taxon>Escherichia</taxon>
    </lineage>
</organism>
<sequence>MELVLKDAQSALTVSETTFGRDFNEALVHQVVVAYAAGARQGTRAQKTRAEVTGSGKKPWRQKGTGRARSGSIKSPIWRSGGVTFAARPQDHSQKVNKKMYRGALKSILSELVRQDRLIVVEKFSVEAPKTKLLAQKLKDMALEDVLIITGELDENLFLAARNLHKVDVRDATGIDPVSLIAFDKVVMTADAVKQVEEMLA</sequence>